<gene>
    <name type="primary">hisD</name>
</gene>
<proteinExistence type="inferred from homology"/>
<reference key="1">
    <citation type="journal article" date="1989" name="Mol. Gen. Genet.">
        <title>Cloning of histidine genes of Azospirillum brasilense: organization of the ABFH gene cluster and nucleotide sequence of the hisB gene.</title>
        <authorList>
            <person name="Fani R."/>
            <person name="Bazzicalupo M."/>
            <person name="Damiani G."/>
            <person name="Bianchi A."/>
            <person name="Schipani C."/>
            <person name="Sgaramella V."/>
            <person name="Polsinelli M."/>
        </authorList>
    </citation>
    <scope>NUCLEOTIDE SEQUENCE [GENOMIC DNA]</scope>
    <source>
        <strain>Sp6</strain>
    </source>
</reference>
<name>HISX_AZOBR</name>
<comment type="function">
    <text evidence="1">Catalyzes the sequential NAD-dependent oxidations of L-histidinol to L-histidinaldehyde and then to L-histidine.</text>
</comment>
<comment type="catalytic activity">
    <reaction>
        <text>L-histidinol + 2 NAD(+) + H2O = L-histidine + 2 NADH + 3 H(+)</text>
        <dbReference type="Rhea" id="RHEA:20641"/>
        <dbReference type="ChEBI" id="CHEBI:15377"/>
        <dbReference type="ChEBI" id="CHEBI:15378"/>
        <dbReference type="ChEBI" id="CHEBI:57540"/>
        <dbReference type="ChEBI" id="CHEBI:57595"/>
        <dbReference type="ChEBI" id="CHEBI:57699"/>
        <dbReference type="ChEBI" id="CHEBI:57945"/>
        <dbReference type="EC" id="1.1.1.23"/>
    </reaction>
</comment>
<comment type="pathway">
    <text>Amino-acid biosynthesis; L-histidine biosynthesis; L-histidine from 5-phospho-alpha-D-ribose 1-diphosphate: step 9/9.</text>
</comment>
<comment type="similarity">
    <text evidence="3">Belongs to the histidinol dehydrogenase family.</text>
</comment>
<comment type="caution">
    <text evidence="3">Highly divergent compared to other bacterial HisD.</text>
</comment>
<accession>P18786</accession>
<organism>
    <name type="scientific">Azospirillum brasilense</name>
    <dbReference type="NCBI Taxonomy" id="192"/>
    <lineage>
        <taxon>Bacteria</taxon>
        <taxon>Pseudomonadati</taxon>
        <taxon>Pseudomonadota</taxon>
        <taxon>Alphaproteobacteria</taxon>
        <taxon>Rhodospirillales</taxon>
        <taxon>Azospirillaceae</taxon>
        <taxon>Azospirillum</taxon>
    </lineage>
</organism>
<protein>
    <recommendedName>
        <fullName>Putative histidinol dehydrogenase</fullName>
        <shortName>HDH</shortName>
        <ecNumber>1.1.1.23</ecNumber>
    </recommendedName>
</protein>
<evidence type="ECO:0000250" key="1"/>
<evidence type="ECO:0000256" key="2">
    <source>
        <dbReference type="SAM" id="MobiDB-lite"/>
    </source>
</evidence>
<evidence type="ECO:0000305" key="3"/>
<dbReference type="EC" id="1.1.1.23"/>
<dbReference type="EMBL" id="X17435">
    <property type="protein sequence ID" value="CAA35477.1"/>
    <property type="molecule type" value="Genomic_DNA"/>
</dbReference>
<dbReference type="PIR" id="PE0006">
    <property type="entry name" value="PE0006"/>
</dbReference>
<dbReference type="UniPathway" id="UPA00031">
    <property type="reaction ID" value="UER00014"/>
</dbReference>
<dbReference type="GO" id="GO:0004399">
    <property type="term" value="F:histidinol dehydrogenase activity"/>
    <property type="evidence" value="ECO:0007669"/>
    <property type="project" value="UniProtKB-EC"/>
</dbReference>
<dbReference type="GO" id="GO:0000105">
    <property type="term" value="P:L-histidine biosynthetic process"/>
    <property type="evidence" value="ECO:0007669"/>
    <property type="project" value="UniProtKB-UniPathway"/>
</dbReference>
<keyword id="KW-0028">Amino-acid biosynthesis</keyword>
<keyword id="KW-0368">Histidine biosynthesis</keyword>
<keyword id="KW-0520">NAD</keyword>
<keyword id="KW-0560">Oxidoreductase</keyword>
<sequence>ILVQTAPAGPIDVLIGRPALQRPDIAPRHHAPPHRAEREAVEADRSRRTAGDGWGFAGLRQLPAHAGGQHQQGREGQEKASGRRHVRCHIPLCALSVHTTMHTHALSGIATDGHRRFRRRHLCRPRAS</sequence>
<feature type="chain" id="PRO_0000135719" description="Putative histidinol dehydrogenase">
    <location>
        <begin position="1" status="less than"/>
        <end position="128"/>
    </location>
</feature>
<feature type="region of interest" description="Disordered" evidence="2">
    <location>
        <begin position="21"/>
        <end position="84"/>
    </location>
</feature>
<feature type="compositionally biased region" description="Basic and acidic residues" evidence="2">
    <location>
        <begin position="34"/>
        <end position="50"/>
    </location>
</feature>
<feature type="compositionally biased region" description="Basic and acidic residues" evidence="2">
    <location>
        <begin position="72"/>
        <end position="81"/>
    </location>
</feature>
<feature type="non-terminal residue">
    <location>
        <position position="1"/>
    </location>
</feature>